<keyword id="KW-0378">Hydrolase</keyword>
<keyword id="KW-0460">Magnesium</keyword>
<keyword id="KW-0464">Manganese</keyword>
<keyword id="KW-0479">Metal-binding</keyword>
<dbReference type="EC" id="3.6.1.-" evidence="1"/>
<dbReference type="EMBL" id="CP000720">
    <property type="protein sequence ID" value="ABS45914.1"/>
    <property type="molecule type" value="Genomic_DNA"/>
</dbReference>
<dbReference type="RefSeq" id="WP_002211080.1">
    <property type="nucleotide sequence ID" value="NC_009708.1"/>
</dbReference>
<dbReference type="SMR" id="A7FJ95"/>
<dbReference type="KEGG" id="ypi:YpsIP31758_2354"/>
<dbReference type="HOGENOM" id="CLU_040940_5_2_6"/>
<dbReference type="Proteomes" id="UP000002412">
    <property type="component" value="Chromosome"/>
</dbReference>
<dbReference type="GO" id="GO:0010945">
    <property type="term" value="F:coenzyme A diphosphatase activity"/>
    <property type="evidence" value="ECO:0007669"/>
    <property type="project" value="InterPro"/>
</dbReference>
<dbReference type="GO" id="GO:0000287">
    <property type="term" value="F:magnesium ion binding"/>
    <property type="evidence" value="ECO:0007669"/>
    <property type="project" value="UniProtKB-UniRule"/>
</dbReference>
<dbReference type="GO" id="GO:0030145">
    <property type="term" value="F:manganese ion binding"/>
    <property type="evidence" value="ECO:0007669"/>
    <property type="project" value="UniProtKB-UniRule"/>
</dbReference>
<dbReference type="GO" id="GO:0009132">
    <property type="term" value="P:nucleoside diphosphate metabolic process"/>
    <property type="evidence" value="ECO:0007669"/>
    <property type="project" value="InterPro"/>
</dbReference>
<dbReference type="CDD" id="cd03426">
    <property type="entry name" value="NUDIX_CoAse_Nudt7"/>
    <property type="match status" value="1"/>
</dbReference>
<dbReference type="Gene3D" id="3.90.79.10">
    <property type="entry name" value="Nucleoside Triphosphate Pyrophosphohydrolase"/>
    <property type="match status" value="1"/>
</dbReference>
<dbReference type="HAMAP" id="MF_01592">
    <property type="entry name" value="Nudix_NudL"/>
    <property type="match status" value="1"/>
</dbReference>
<dbReference type="InterPro" id="IPR045121">
    <property type="entry name" value="CoAse"/>
</dbReference>
<dbReference type="InterPro" id="IPR015797">
    <property type="entry name" value="NUDIX_hydrolase-like_dom_sf"/>
</dbReference>
<dbReference type="InterPro" id="IPR000086">
    <property type="entry name" value="NUDIX_hydrolase_dom"/>
</dbReference>
<dbReference type="InterPro" id="IPR000059">
    <property type="entry name" value="NUDIX_hydrolase_NudL_CS"/>
</dbReference>
<dbReference type="InterPro" id="IPR023735">
    <property type="entry name" value="Nudix_NudL"/>
</dbReference>
<dbReference type="NCBIfam" id="NF007980">
    <property type="entry name" value="PRK10707.1"/>
    <property type="match status" value="1"/>
</dbReference>
<dbReference type="PANTHER" id="PTHR12992:SF11">
    <property type="entry name" value="MITOCHONDRIAL COENZYME A DIPHOSPHATASE NUDT8"/>
    <property type="match status" value="1"/>
</dbReference>
<dbReference type="PANTHER" id="PTHR12992">
    <property type="entry name" value="NUDIX HYDROLASE"/>
    <property type="match status" value="1"/>
</dbReference>
<dbReference type="Pfam" id="PF00293">
    <property type="entry name" value="NUDIX"/>
    <property type="match status" value="1"/>
</dbReference>
<dbReference type="SUPFAM" id="SSF55811">
    <property type="entry name" value="Nudix"/>
    <property type="match status" value="1"/>
</dbReference>
<dbReference type="PROSITE" id="PS51462">
    <property type="entry name" value="NUDIX"/>
    <property type="match status" value="1"/>
</dbReference>
<dbReference type="PROSITE" id="PS01293">
    <property type="entry name" value="NUDIX_COA"/>
    <property type="match status" value="1"/>
</dbReference>
<evidence type="ECO:0000255" key="1">
    <source>
        <dbReference type="HAMAP-Rule" id="MF_01592"/>
    </source>
</evidence>
<name>NUDL_YERP3</name>
<reference key="1">
    <citation type="journal article" date="2007" name="PLoS Genet.">
        <title>The complete genome sequence of Yersinia pseudotuberculosis IP31758, the causative agent of Far East scarlet-like fever.</title>
        <authorList>
            <person name="Eppinger M."/>
            <person name="Rosovitz M.J."/>
            <person name="Fricke W.F."/>
            <person name="Rasko D.A."/>
            <person name="Kokorina G."/>
            <person name="Fayolle C."/>
            <person name="Lindler L.E."/>
            <person name="Carniel E."/>
            <person name="Ravel J."/>
        </authorList>
    </citation>
    <scope>NUCLEOTIDE SEQUENCE [LARGE SCALE GENOMIC DNA]</scope>
    <source>
        <strain>IP 31758</strain>
    </source>
</reference>
<accession>A7FJ95</accession>
<sequence>MSELITGQYLSEFINRFQLQLPQPDNVLTHSHYFSATNRRAAVLIPIICRPEPTLLLTRRADHLRKHAGQVAFPGGKADPDDQSLISTALREAEEEVAIPASVVHVLGKLAPLNSSSGYHVTPIVGLVPANIPFYGNDEEVAGLFEIPLHEALSLSRYHSLDIHREGINHRVYLSWYENQFIWGLTATIIRHLAQQVSI</sequence>
<organism>
    <name type="scientific">Yersinia pseudotuberculosis serotype O:1b (strain IP 31758)</name>
    <dbReference type="NCBI Taxonomy" id="349747"/>
    <lineage>
        <taxon>Bacteria</taxon>
        <taxon>Pseudomonadati</taxon>
        <taxon>Pseudomonadota</taxon>
        <taxon>Gammaproteobacteria</taxon>
        <taxon>Enterobacterales</taxon>
        <taxon>Yersiniaceae</taxon>
        <taxon>Yersinia</taxon>
    </lineage>
</organism>
<gene>
    <name evidence="1" type="primary">nudL</name>
    <name type="ordered locus">YpsIP31758_2354</name>
</gene>
<comment type="function">
    <text evidence="1">Probably mediates the hydrolysis of some nucleoside diphosphate derivatives.</text>
</comment>
<comment type="cofactor">
    <cofactor evidence="1">
        <name>Mn(2+)</name>
        <dbReference type="ChEBI" id="CHEBI:29035"/>
    </cofactor>
    <cofactor evidence="1">
        <name>Mg(2+)</name>
        <dbReference type="ChEBI" id="CHEBI:18420"/>
    </cofactor>
</comment>
<comment type="similarity">
    <text evidence="1">Belongs to the Nudix hydrolase family. PCD1 subfamily.</text>
</comment>
<proteinExistence type="inferred from homology"/>
<feature type="chain" id="PRO_0000315594" description="Uncharacterized Nudix hydrolase NudL">
    <location>
        <begin position="1"/>
        <end position="199"/>
    </location>
</feature>
<feature type="domain" description="Nudix hydrolase" evidence="1">
    <location>
        <begin position="38"/>
        <end position="169"/>
    </location>
</feature>
<feature type="short sequence motif" description="Nudix box">
    <location>
        <begin position="76"/>
        <end position="98"/>
    </location>
</feature>
<feature type="binding site" evidence="1">
    <location>
        <position position="92"/>
    </location>
    <ligand>
        <name>Mg(2+)</name>
        <dbReference type="ChEBI" id="CHEBI:18420"/>
    </ligand>
</feature>
<feature type="binding site" evidence="1">
    <location>
        <position position="96"/>
    </location>
    <ligand>
        <name>Mg(2+)</name>
        <dbReference type="ChEBI" id="CHEBI:18420"/>
    </ligand>
</feature>
<protein>
    <recommendedName>
        <fullName evidence="1">Uncharacterized Nudix hydrolase NudL</fullName>
        <ecNumber evidence="1">3.6.1.-</ecNumber>
    </recommendedName>
</protein>